<name>ARHL1_RAT</name>
<comment type="function">
    <text evidence="1 2">Required for myofibril assembly and outgrowth of the cardiac chambers in the developing heart (By similarity). Appears to be catalytically inactive, showing no activity against O-acetyl-ADP-ribose (By similarity).</text>
</comment>
<comment type="subcellular location">
    <subcellularLocation>
        <location evidence="1">Cytoplasm</location>
        <location evidence="1">Myofibril</location>
        <location evidence="1">Sarcomere</location>
    </subcellularLocation>
</comment>
<comment type="similarity">
    <text evidence="3">Belongs to the ADP-ribosylglycohydrolase family.</text>
</comment>
<comment type="caution">
    <text evidence="1">Although it belongs to the ADP-ribosylglycohydrolase family, lacks the metal-binding and substrate-binding residues, suggesting that it has no hydrolase activity.</text>
</comment>
<reference key="1">
    <citation type="journal article" date="2004" name="Genome Res.">
        <title>The status, quality, and expansion of the NIH full-length cDNA project: the Mammalian Gene Collection (MGC).</title>
        <authorList>
            <consortium name="The MGC Project Team"/>
        </authorList>
    </citation>
    <scope>NUCLEOTIDE SEQUENCE [LARGE SCALE MRNA]</scope>
    <source>
        <tissue>Heart</tissue>
    </source>
</reference>
<dbReference type="EMBL" id="BC083773">
    <property type="protein sequence ID" value="AAH83773.1"/>
    <property type="molecule type" value="mRNA"/>
</dbReference>
<dbReference type="RefSeq" id="NP_001013072.1">
    <property type="nucleotide sequence ID" value="NM_001013054.2"/>
</dbReference>
<dbReference type="SMR" id="Q5XIB3"/>
<dbReference type="BioGRID" id="253353">
    <property type="interactions" value="1"/>
</dbReference>
<dbReference type="FunCoup" id="Q5XIB3">
    <property type="interactions" value="117"/>
</dbReference>
<dbReference type="STRING" id="10116.ENSRNOP00000026391"/>
<dbReference type="PhosphoSitePlus" id="Q5XIB3"/>
<dbReference type="GeneID" id="290880"/>
<dbReference type="KEGG" id="rno:290880"/>
<dbReference type="UCSC" id="RGD:1305641">
    <property type="organism name" value="rat"/>
</dbReference>
<dbReference type="AGR" id="RGD:1305641"/>
<dbReference type="CTD" id="113622"/>
<dbReference type="RGD" id="1305641">
    <property type="gene designation" value="Adprhl1"/>
</dbReference>
<dbReference type="VEuPathDB" id="HostDB:ENSRNOG00000019504"/>
<dbReference type="eggNOG" id="ENOG502QPMI">
    <property type="taxonomic scope" value="Eukaryota"/>
</dbReference>
<dbReference type="HOGENOM" id="CLU_047061_0_0_1"/>
<dbReference type="InParanoid" id="Q5XIB3"/>
<dbReference type="PRO" id="PR:Q5XIB3"/>
<dbReference type="Proteomes" id="UP000002494">
    <property type="component" value="Chromosome 16"/>
</dbReference>
<dbReference type="Bgee" id="ENSRNOG00000062013">
    <property type="expression patterns" value="Expressed in heart and 9 other cell types or tissues"/>
</dbReference>
<dbReference type="GO" id="GO:0030017">
    <property type="term" value="C:sarcomere"/>
    <property type="evidence" value="ECO:0000250"/>
    <property type="project" value="UniProtKB"/>
</dbReference>
<dbReference type="GO" id="GO:0003875">
    <property type="term" value="F:ADP-ribosylarginine hydrolase activity"/>
    <property type="evidence" value="ECO:0007669"/>
    <property type="project" value="InterPro"/>
</dbReference>
<dbReference type="GO" id="GO:0000287">
    <property type="term" value="F:magnesium ion binding"/>
    <property type="evidence" value="ECO:0007669"/>
    <property type="project" value="InterPro"/>
</dbReference>
<dbReference type="GO" id="GO:0003242">
    <property type="term" value="P:cardiac chamber ballooning"/>
    <property type="evidence" value="ECO:0000250"/>
    <property type="project" value="UniProtKB"/>
</dbReference>
<dbReference type="GO" id="GO:0055003">
    <property type="term" value="P:cardiac myofibril assembly"/>
    <property type="evidence" value="ECO:0000250"/>
    <property type="project" value="UniProtKB"/>
</dbReference>
<dbReference type="GO" id="GO:0051725">
    <property type="term" value="P:protein de-ADP-ribosylation"/>
    <property type="evidence" value="ECO:0007669"/>
    <property type="project" value="InterPro"/>
</dbReference>
<dbReference type="FunFam" id="1.10.4080.10:FF:000002">
    <property type="entry name" value="ADP-ribosylarginine hydrolase isoform X1"/>
    <property type="match status" value="1"/>
</dbReference>
<dbReference type="Gene3D" id="1.10.4080.10">
    <property type="entry name" value="ADP-ribosylation/Crystallin J1"/>
    <property type="match status" value="1"/>
</dbReference>
<dbReference type="InterPro" id="IPR012108">
    <property type="entry name" value="ADP-ribosylarg_hydro"/>
</dbReference>
<dbReference type="InterPro" id="IPR050792">
    <property type="entry name" value="ADP-ribosylglycohydrolase"/>
</dbReference>
<dbReference type="InterPro" id="IPR005502">
    <property type="entry name" value="Ribosyl_crysJ1"/>
</dbReference>
<dbReference type="InterPro" id="IPR036705">
    <property type="entry name" value="Ribosyl_crysJ1_sf"/>
</dbReference>
<dbReference type="PANTHER" id="PTHR16222">
    <property type="entry name" value="ADP-RIBOSYLGLYCOHYDROLASE"/>
    <property type="match status" value="1"/>
</dbReference>
<dbReference type="PANTHER" id="PTHR16222:SF23">
    <property type="entry name" value="INACTIVE ADP-RIBOSYLTRANSFERASE ARH2"/>
    <property type="match status" value="1"/>
</dbReference>
<dbReference type="Pfam" id="PF03747">
    <property type="entry name" value="ADP_ribosyl_GH"/>
    <property type="match status" value="1"/>
</dbReference>
<dbReference type="PIRSF" id="PIRSF016939">
    <property type="entry name" value="ADP_ribslarg_hdr"/>
    <property type="match status" value="1"/>
</dbReference>
<dbReference type="SUPFAM" id="SSF101478">
    <property type="entry name" value="ADP-ribosylglycohydrolase"/>
    <property type="match status" value="1"/>
</dbReference>
<accession>Q5XIB3</accession>
<feature type="chain" id="PRO_0000277609" description="Inactive ADP-ribosyltransferase ARH2">
    <location>
        <begin position="1"/>
        <end position="353"/>
    </location>
</feature>
<feature type="modified residue" description="Phosphoserine" evidence="2">
    <location>
        <position position="27"/>
    </location>
</feature>
<gene>
    <name type="primary">Adprhl1</name>
    <name type="synonym">Arh2</name>
</gene>
<keyword id="KW-0963">Cytoplasm</keyword>
<keyword id="KW-0597">Phosphoprotein</keyword>
<keyword id="KW-1185">Reference proteome</keyword>
<organism>
    <name type="scientific">Rattus norvegicus</name>
    <name type="common">Rat</name>
    <dbReference type="NCBI Taxonomy" id="10116"/>
    <lineage>
        <taxon>Eukaryota</taxon>
        <taxon>Metazoa</taxon>
        <taxon>Chordata</taxon>
        <taxon>Craniata</taxon>
        <taxon>Vertebrata</taxon>
        <taxon>Euteleostomi</taxon>
        <taxon>Mammalia</taxon>
        <taxon>Eutheria</taxon>
        <taxon>Euarchontoglires</taxon>
        <taxon>Glires</taxon>
        <taxon>Rodentia</taxon>
        <taxon>Myomorpha</taxon>
        <taxon>Muroidea</taxon>
        <taxon>Muridae</taxon>
        <taxon>Murinae</taxon>
        <taxon>Rattus</taxon>
    </lineage>
</organism>
<sequence>MEKFKAAMLLGTVGDALGYGNVCRENSASGSIQEELQKTRGLDSLVLSPGKWPVSDNTIMHMATAEALTTDYWCLDDLYREMVKRYVETVEKLSEHRPDPSTIEGCSQLKPDNYLLAWHTPFSEKGSGFGAATKAMCIGMRYWKPERLETLIEVSIECGRMTHNHPTGFLGSLCTALFASYAIQGKSLVQWGRDMLKVLPLAEEYCRKSIRHMAEYQEHWFYFEAKWQFYLEERKIREDSEVTAVFPDNYDAEERDKTYKKWSSEGRGGRRGHDAPMIAYDALLASGSSWTELCQRAMFHRGESGATGTIAGCLFGLLHGLATVPPGLYQELEHKGRLEDLGTALHRLSTEEK</sequence>
<evidence type="ECO:0000250" key="1">
    <source>
        <dbReference type="UniProtKB" id="Q6AZR2"/>
    </source>
</evidence>
<evidence type="ECO:0000250" key="2">
    <source>
        <dbReference type="UniProtKB" id="Q8BGK2"/>
    </source>
</evidence>
<evidence type="ECO:0000305" key="3"/>
<protein>
    <recommendedName>
        <fullName evidence="3">Inactive ADP-ribosyltransferase ARH2</fullName>
    </recommendedName>
    <alternativeName>
        <fullName evidence="3">ADP-ribosylhydrolase-like protein 1</fullName>
    </alternativeName>
    <alternativeName>
        <fullName>[Protein ADP-ribosylarginine] hydrolase-like protein 1</fullName>
    </alternativeName>
</protein>
<proteinExistence type="evidence at transcript level"/>